<proteinExistence type="inferred from homology"/>
<feature type="chain" id="PRO_0000298211" description="Cell division topological specificity factor">
    <location>
        <begin position="1"/>
        <end position="84"/>
    </location>
</feature>
<protein>
    <recommendedName>
        <fullName evidence="1">Cell division topological specificity factor</fullName>
    </recommendedName>
</protein>
<evidence type="ECO:0000255" key="1">
    <source>
        <dbReference type="HAMAP-Rule" id="MF_00262"/>
    </source>
</evidence>
<sequence length="84" mass="9637">MALLDYLLGQKKKKSANLAKDRLQILLAHERSERSAPEYLPKMREEILAVISKYVTIDQEQLQISIDEANGFEVLELNLVLPDK</sequence>
<dbReference type="EMBL" id="CP000109">
    <property type="protein sequence ID" value="ABB41761.1"/>
    <property type="molecule type" value="Genomic_DNA"/>
</dbReference>
<dbReference type="SMR" id="Q31GG2"/>
<dbReference type="STRING" id="317025.Tcr_1166"/>
<dbReference type="KEGG" id="tcx:Tcr_1166"/>
<dbReference type="eggNOG" id="COG0851">
    <property type="taxonomic scope" value="Bacteria"/>
</dbReference>
<dbReference type="HOGENOM" id="CLU_137929_2_1_6"/>
<dbReference type="OrthoDB" id="9802655at2"/>
<dbReference type="GO" id="GO:0051301">
    <property type="term" value="P:cell division"/>
    <property type="evidence" value="ECO:0007669"/>
    <property type="project" value="UniProtKB-KW"/>
</dbReference>
<dbReference type="GO" id="GO:0032955">
    <property type="term" value="P:regulation of division septum assembly"/>
    <property type="evidence" value="ECO:0007669"/>
    <property type="project" value="InterPro"/>
</dbReference>
<dbReference type="FunFam" id="3.30.1070.10:FF:000001">
    <property type="entry name" value="Cell division topological specificity factor"/>
    <property type="match status" value="1"/>
</dbReference>
<dbReference type="Gene3D" id="3.30.1070.10">
    <property type="entry name" value="Cell division topological specificity factor MinE"/>
    <property type="match status" value="1"/>
</dbReference>
<dbReference type="HAMAP" id="MF_00262">
    <property type="entry name" value="MinE"/>
    <property type="match status" value="1"/>
</dbReference>
<dbReference type="InterPro" id="IPR005527">
    <property type="entry name" value="MinE"/>
</dbReference>
<dbReference type="InterPro" id="IPR036707">
    <property type="entry name" value="MinE_sf"/>
</dbReference>
<dbReference type="NCBIfam" id="TIGR01215">
    <property type="entry name" value="minE"/>
    <property type="match status" value="1"/>
</dbReference>
<dbReference type="NCBIfam" id="NF001422">
    <property type="entry name" value="PRK00296.1"/>
    <property type="match status" value="1"/>
</dbReference>
<dbReference type="Pfam" id="PF03776">
    <property type="entry name" value="MinE"/>
    <property type="match status" value="1"/>
</dbReference>
<dbReference type="SUPFAM" id="SSF55229">
    <property type="entry name" value="Cell division protein MinE topological specificity domain"/>
    <property type="match status" value="1"/>
</dbReference>
<accession>Q31GG2</accession>
<organism>
    <name type="scientific">Hydrogenovibrio crunogenus (strain DSM 25203 / XCL-2)</name>
    <name type="common">Thiomicrospira crunogena</name>
    <dbReference type="NCBI Taxonomy" id="317025"/>
    <lineage>
        <taxon>Bacteria</taxon>
        <taxon>Pseudomonadati</taxon>
        <taxon>Pseudomonadota</taxon>
        <taxon>Gammaproteobacteria</taxon>
        <taxon>Thiotrichales</taxon>
        <taxon>Piscirickettsiaceae</taxon>
        <taxon>Hydrogenovibrio</taxon>
    </lineage>
</organism>
<keyword id="KW-0131">Cell cycle</keyword>
<keyword id="KW-0132">Cell division</keyword>
<comment type="function">
    <text evidence="1">Prevents the cell division inhibition by proteins MinC and MinD at internal division sites while permitting inhibition at polar sites. This ensures cell division at the proper site by restricting the formation of a division septum at the midpoint of the long axis of the cell.</text>
</comment>
<comment type="similarity">
    <text evidence="1">Belongs to the MinE family.</text>
</comment>
<reference key="1">
    <citation type="journal article" date="2006" name="PLoS Biol.">
        <title>The genome of deep-sea vent chemolithoautotroph Thiomicrospira crunogena XCL-2.</title>
        <authorList>
            <person name="Scott K.M."/>
            <person name="Sievert S.M."/>
            <person name="Abril F.N."/>
            <person name="Ball L.A."/>
            <person name="Barrett C.J."/>
            <person name="Blake R.A."/>
            <person name="Boller A.J."/>
            <person name="Chain P.S.G."/>
            <person name="Clark J.A."/>
            <person name="Davis C.R."/>
            <person name="Detter C."/>
            <person name="Do K.F."/>
            <person name="Dobrinski K.P."/>
            <person name="Faza B.I."/>
            <person name="Fitzpatrick K.A."/>
            <person name="Freyermuth S.K."/>
            <person name="Harmer T.L."/>
            <person name="Hauser L.J."/>
            <person name="Huegler M."/>
            <person name="Kerfeld C.A."/>
            <person name="Klotz M.G."/>
            <person name="Kong W.W."/>
            <person name="Land M."/>
            <person name="Lapidus A."/>
            <person name="Larimer F.W."/>
            <person name="Longo D.L."/>
            <person name="Lucas S."/>
            <person name="Malfatti S.A."/>
            <person name="Massey S.E."/>
            <person name="Martin D.D."/>
            <person name="McCuddin Z."/>
            <person name="Meyer F."/>
            <person name="Moore J.L."/>
            <person name="Ocampo L.H. Jr."/>
            <person name="Paul J.H."/>
            <person name="Paulsen I.T."/>
            <person name="Reep D.K."/>
            <person name="Ren Q."/>
            <person name="Ross R.L."/>
            <person name="Sato P.Y."/>
            <person name="Thomas P."/>
            <person name="Tinkham L.E."/>
            <person name="Zeruth G.T."/>
        </authorList>
    </citation>
    <scope>NUCLEOTIDE SEQUENCE [LARGE SCALE GENOMIC DNA]</scope>
    <source>
        <strain>DSM 25203 / XCL-2</strain>
    </source>
</reference>
<gene>
    <name evidence="1" type="primary">minE</name>
    <name type="ordered locus">Tcr_1166</name>
</gene>
<name>MINE_HYDCU</name>